<sequence>MITEDEVNKLLSENEALFRFMGAKFEKIERGVAKLSFEYKEELSRIGGMLHGAIIFAAMDYSGSYAVRTLDVKEAYTLEFNVIFLKAMKTPPFTFLARVVRETKRYAYVEVEGFDGNNELCAKGNGIWHLIRD</sequence>
<accession>Q96ZP3</accession>
<comment type="similarity">
    <text evidence="1">Belongs to the thioesterase PaaI family.</text>
</comment>
<reference key="1">
    <citation type="journal article" date="2001" name="DNA Res.">
        <title>Complete genome sequence of an aerobic thermoacidophilic Crenarchaeon, Sulfolobus tokodaii strain7.</title>
        <authorList>
            <person name="Kawarabayasi Y."/>
            <person name="Hino Y."/>
            <person name="Horikawa H."/>
            <person name="Jin-no K."/>
            <person name="Takahashi M."/>
            <person name="Sekine M."/>
            <person name="Baba S."/>
            <person name="Ankai A."/>
            <person name="Kosugi H."/>
            <person name="Hosoyama A."/>
            <person name="Fukui S."/>
            <person name="Nagai Y."/>
            <person name="Nishijima K."/>
            <person name="Otsuka R."/>
            <person name="Nakazawa H."/>
            <person name="Takamiya M."/>
            <person name="Kato Y."/>
            <person name="Yoshizawa T."/>
            <person name="Tanaka T."/>
            <person name="Kudoh Y."/>
            <person name="Yamazaki J."/>
            <person name="Kushida N."/>
            <person name="Oguchi A."/>
            <person name="Aoki K."/>
            <person name="Masuda S."/>
            <person name="Yanagii M."/>
            <person name="Nishimura M."/>
            <person name="Yamagishi A."/>
            <person name="Oshima T."/>
            <person name="Kikuchi H."/>
        </authorList>
    </citation>
    <scope>NUCLEOTIDE SEQUENCE [LARGE SCALE GENOMIC DNA]</scope>
    <source>
        <strain>DSM 16993 / JCM 10545 / NBRC 100140 / 7</strain>
    </source>
</reference>
<protein>
    <recommendedName>
        <fullName>Putative esterase STK_17900</fullName>
        <ecNumber>3.1.2.-</ecNumber>
    </recommendedName>
</protein>
<name>Y1790_SULTO</name>
<dbReference type="EC" id="3.1.2.-"/>
<dbReference type="EMBL" id="BA000023">
    <property type="protein sequence ID" value="BAB66881.1"/>
    <property type="molecule type" value="Genomic_DNA"/>
</dbReference>
<dbReference type="RefSeq" id="WP_010979858.1">
    <property type="nucleotide sequence ID" value="NC_003106.2"/>
</dbReference>
<dbReference type="SMR" id="Q96ZP3"/>
<dbReference type="STRING" id="273063.STK_17900"/>
<dbReference type="GeneID" id="1459846"/>
<dbReference type="KEGG" id="sto:STK_17900"/>
<dbReference type="PATRIC" id="fig|273063.9.peg.2046"/>
<dbReference type="eggNOG" id="arCOG00777">
    <property type="taxonomic scope" value="Archaea"/>
</dbReference>
<dbReference type="OrthoDB" id="24516at2157"/>
<dbReference type="Proteomes" id="UP000001015">
    <property type="component" value="Chromosome"/>
</dbReference>
<dbReference type="GO" id="GO:0047617">
    <property type="term" value="F:fatty acyl-CoA hydrolase activity"/>
    <property type="evidence" value="ECO:0007669"/>
    <property type="project" value="InterPro"/>
</dbReference>
<dbReference type="CDD" id="cd03443">
    <property type="entry name" value="PaaI_thioesterase"/>
    <property type="match status" value="1"/>
</dbReference>
<dbReference type="Gene3D" id="3.10.129.10">
    <property type="entry name" value="Hotdog Thioesterase"/>
    <property type="match status" value="1"/>
</dbReference>
<dbReference type="InterPro" id="IPR039298">
    <property type="entry name" value="ACOT13"/>
</dbReference>
<dbReference type="InterPro" id="IPR029069">
    <property type="entry name" value="HotDog_dom_sf"/>
</dbReference>
<dbReference type="InterPro" id="IPR003736">
    <property type="entry name" value="PAAI_dom"/>
</dbReference>
<dbReference type="InterPro" id="IPR006683">
    <property type="entry name" value="Thioestr_dom"/>
</dbReference>
<dbReference type="NCBIfam" id="TIGR00369">
    <property type="entry name" value="unchar_dom_1"/>
    <property type="match status" value="1"/>
</dbReference>
<dbReference type="PANTHER" id="PTHR21660:SF1">
    <property type="entry name" value="ACYL-COENZYME A THIOESTERASE 13"/>
    <property type="match status" value="1"/>
</dbReference>
<dbReference type="PANTHER" id="PTHR21660">
    <property type="entry name" value="THIOESTERASE SUPERFAMILY MEMBER-RELATED"/>
    <property type="match status" value="1"/>
</dbReference>
<dbReference type="Pfam" id="PF03061">
    <property type="entry name" value="4HBT"/>
    <property type="match status" value="1"/>
</dbReference>
<dbReference type="SUPFAM" id="SSF54637">
    <property type="entry name" value="Thioesterase/thiol ester dehydrase-isomerase"/>
    <property type="match status" value="1"/>
</dbReference>
<keyword id="KW-0378">Hydrolase</keyword>
<keyword id="KW-1185">Reference proteome</keyword>
<proteinExistence type="inferred from homology"/>
<evidence type="ECO:0000305" key="1"/>
<gene>
    <name type="ordered locus">STK_17900</name>
</gene>
<feature type="chain" id="PRO_0000156694" description="Putative esterase STK_17900">
    <location>
        <begin position="1"/>
        <end position="133"/>
    </location>
</feature>
<organism>
    <name type="scientific">Sulfurisphaera tokodaii (strain DSM 16993 / JCM 10545 / NBRC 100140 / 7)</name>
    <name type="common">Sulfolobus tokodaii</name>
    <dbReference type="NCBI Taxonomy" id="273063"/>
    <lineage>
        <taxon>Archaea</taxon>
        <taxon>Thermoproteota</taxon>
        <taxon>Thermoprotei</taxon>
        <taxon>Sulfolobales</taxon>
        <taxon>Sulfolobaceae</taxon>
        <taxon>Sulfurisphaera</taxon>
    </lineage>
</organism>